<reference key="1">
    <citation type="journal article" date="1983" name="Nature">
        <title>Nucleotide sequence of cassava latent virus DNA.</title>
        <authorList>
            <person name="Stanley J."/>
            <person name="Gay M.R."/>
        </authorList>
    </citation>
    <scope>NUCLEOTIDE SEQUENCE [GENOMIC DNA]</scope>
</reference>
<evidence type="ECO:0000250" key="1"/>
<evidence type="ECO:0000305" key="2"/>
<name>AC4_CLVK</name>
<feature type="chain" id="PRO_0000323689" description="Protein AC4">
    <location>
        <begin position="1"/>
        <end position="183"/>
    </location>
</feature>
<keyword id="KW-0945">Host-virus interaction</keyword>
<keyword id="KW-1090">Inhibition of host innate immune response by virus</keyword>
<keyword id="KW-0941">Suppressor of RNA silencing</keyword>
<keyword id="KW-0899">Viral immunoevasion</keyword>
<gene>
    <name type="ORF">AC4</name>
    <name type="ORF">AL4</name>
</gene>
<protein>
    <recommendedName>
        <fullName>Protein AC4</fullName>
    </recommendedName>
    <alternativeName>
        <fullName>Protein AL4</fullName>
    </alternativeName>
</protein>
<accession>P0C6G1</accession>
<sequence length="183" mass="20865">MPFRDTYIMSPINRRRCSRVSLVECLQLTWSTXELLVFEFKPRMSFSHTQSVLYPKNTYCHSFKHFLSNQTLSSLKSVESCIRMGNLTCMPSFNSRVKSRLRTIVSSIVYTQAVAPVSTPTFKVPNQARMSSPIWIRTATPSNGDNFKSMDDLLEAVNNQRMMLTPKRLTAAVSQKLLMSLGN</sequence>
<organism>
    <name type="scientific">African cassava mosaic virus (isolate West Kenyan 844)</name>
    <name type="common">ACMV</name>
    <name type="synonym">Cassava latent virus (isolate West Kenyan 844)</name>
    <dbReference type="NCBI Taxonomy" id="10818"/>
    <lineage>
        <taxon>Viruses</taxon>
        <taxon>Monodnaviria</taxon>
        <taxon>Shotokuvirae</taxon>
        <taxon>Cressdnaviricota</taxon>
        <taxon>Repensiviricetes</taxon>
        <taxon>Geplafuvirales</taxon>
        <taxon>Geminiviridae</taxon>
        <taxon>Begomovirus</taxon>
        <taxon>Begomovirus manihotis</taxon>
    </lineage>
</organism>
<organismHost>
    <name type="scientific">Hewittia sublobata</name>
    <dbReference type="NCBI Taxonomy" id="197394"/>
</organismHost>
<organismHost>
    <name type="scientific">Jatropha multifida</name>
    <name type="common">Coralbush</name>
    <dbReference type="NCBI Taxonomy" id="3996"/>
</organismHost>
<organismHost>
    <name type="scientific">Laportea</name>
    <dbReference type="NCBI Taxonomy" id="194268"/>
</organismHost>
<organismHost>
    <name type="scientific">Manihot esculenta</name>
    <name type="common">Cassava</name>
    <name type="synonym">Jatropha manihot</name>
    <dbReference type="NCBI Taxonomy" id="3983"/>
</organismHost>
<comment type="function">
    <text evidence="1">Pathogenicity determinant (By similarity). May act as a suppressor of RNA-mediated gene silencing, also known as post-transcriptional gene silencing (PTGS), a mechanism of plant viral defense that limits the accumulation of viral RNAs.</text>
</comment>
<comment type="similarity">
    <text evidence="2">Belongs to the geminiviridae protein AC4/C4 family.</text>
</comment>
<proteinExistence type="inferred from homology"/>
<dbReference type="EMBL" id="J02057">
    <property type="status" value="NOT_ANNOTATED_CDS"/>
    <property type="molecule type" value="Genomic_DNA"/>
</dbReference>
<dbReference type="Proteomes" id="UP000008452">
    <property type="component" value="Genome"/>
</dbReference>
<dbReference type="GO" id="GO:0052170">
    <property type="term" value="P:symbiont-mediated suppression of host innate immune response"/>
    <property type="evidence" value="ECO:0007669"/>
    <property type="project" value="UniProtKB-KW"/>
</dbReference>
<dbReference type="InterPro" id="IPR002488">
    <property type="entry name" value="Gemini_C4"/>
</dbReference>
<dbReference type="Pfam" id="PF01492">
    <property type="entry name" value="Gemini_C4"/>
    <property type="match status" value="1"/>
</dbReference>